<evidence type="ECO:0000255" key="1">
    <source>
        <dbReference type="HAMAP-Rule" id="MF_01217"/>
    </source>
</evidence>
<evidence type="ECO:0000255" key="2">
    <source>
        <dbReference type="PROSITE-ProRule" id="PRU00258"/>
    </source>
</evidence>
<accession>Q2LQM3</accession>
<name>ACP_SYNAS</name>
<proteinExistence type="inferred from homology"/>
<protein>
    <recommendedName>
        <fullName evidence="1">Acyl carrier protein</fullName>
        <shortName evidence="1">ACP</shortName>
    </recommendedName>
</protein>
<dbReference type="EMBL" id="CP000252">
    <property type="protein sequence ID" value="ABC76068.1"/>
    <property type="molecule type" value="Genomic_DNA"/>
</dbReference>
<dbReference type="RefSeq" id="WP_011416103.1">
    <property type="nucleotide sequence ID" value="NC_007759.1"/>
</dbReference>
<dbReference type="SMR" id="Q2LQM3"/>
<dbReference type="FunCoup" id="Q2LQM3">
    <property type="interactions" value="489"/>
</dbReference>
<dbReference type="STRING" id="56780.SYN_02364"/>
<dbReference type="KEGG" id="sat:SYN_02364"/>
<dbReference type="eggNOG" id="COG0236">
    <property type="taxonomic scope" value="Bacteria"/>
</dbReference>
<dbReference type="HOGENOM" id="CLU_108696_5_3_7"/>
<dbReference type="InParanoid" id="Q2LQM3"/>
<dbReference type="OrthoDB" id="9804551at2"/>
<dbReference type="UniPathway" id="UPA00094"/>
<dbReference type="Proteomes" id="UP000001933">
    <property type="component" value="Chromosome"/>
</dbReference>
<dbReference type="GO" id="GO:0005829">
    <property type="term" value="C:cytosol"/>
    <property type="evidence" value="ECO:0007669"/>
    <property type="project" value="TreeGrafter"/>
</dbReference>
<dbReference type="GO" id="GO:0016020">
    <property type="term" value="C:membrane"/>
    <property type="evidence" value="ECO:0007669"/>
    <property type="project" value="GOC"/>
</dbReference>
<dbReference type="GO" id="GO:0000035">
    <property type="term" value="F:acyl binding"/>
    <property type="evidence" value="ECO:0007669"/>
    <property type="project" value="TreeGrafter"/>
</dbReference>
<dbReference type="GO" id="GO:0000036">
    <property type="term" value="F:acyl carrier activity"/>
    <property type="evidence" value="ECO:0007669"/>
    <property type="project" value="UniProtKB-UniRule"/>
</dbReference>
<dbReference type="GO" id="GO:0009245">
    <property type="term" value="P:lipid A biosynthetic process"/>
    <property type="evidence" value="ECO:0007669"/>
    <property type="project" value="TreeGrafter"/>
</dbReference>
<dbReference type="Gene3D" id="1.10.1200.10">
    <property type="entry name" value="ACP-like"/>
    <property type="match status" value="1"/>
</dbReference>
<dbReference type="HAMAP" id="MF_01217">
    <property type="entry name" value="Acyl_carrier"/>
    <property type="match status" value="1"/>
</dbReference>
<dbReference type="InterPro" id="IPR003231">
    <property type="entry name" value="ACP"/>
</dbReference>
<dbReference type="InterPro" id="IPR036736">
    <property type="entry name" value="ACP-like_sf"/>
</dbReference>
<dbReference type="InterPro" id="IPR009081">
    <property type="entry name" value="PP-bd_ACP"/>
</dbReference>
<dbReference type="NCBIfam" id="TIGR00517">
    <property type="entry name" value="acyl_carrier"/>
    <property type="match status" value="1"/>
</dbReference>
<dbReference type="NCBIfam" id="NF002148">
    <property type="entry name" value="PRK00982.1-2"/>
    <property type="match status" value="1"/>
</dbReference>
<dbReference type="NCBIfam" id="NF002150">
    <property type="entry name" value="PRK00982.1-4"/>
    <property type="match status" value="1"/>
</dbReference>
<dbReference type="PANTHER" id="PTHR20863">
    <property type="entry name" value="ACYL CARRIER PROTEIN"/>
    <property type="match status" value="1"/>
</dbReference>
<dbReference type="PANTHER" id="PTHR20863:SF76">
    <property type="entry name" value="CARRIER DOMAIN-CONTAINING PROTEIN"/>
    <property type="match status" value="1"/>
</dbReference>
<dbReference type="Pfam" id="PF00550">
    <property type="entry name" value="PP-binding"/>
    <property type="match status" value="1"/>
</dbReference>
<dbReference type="SUPFAM" id="SSF47336">
    <property type="entry name" value="ACP-like"/>
    <property type="match status" value="1"/>
</dbReference>
<dbReference type="PROSITE" id="PS50075">
    <property type="entry name" value="CARRIER"/>
    <property type="match status" value="1"/>
</dbReference>
<reference key="1">
    <citation type="journal article" date="2007" name="Proc. Natl. Acad. Sci. U.S.A.">
        <title>The genome of Syntrophus aciditrophicus: life at the thermodynamic limit of microbial growth.</title>
        <authorList>
            <person name="McInerney M.J."/>
            <person name="Rohlin L."/>
            <person name="Mouttaki H."/>
            <person name="Kim U."/>
            <person name="Krupp R.S."/>
            <person name="Rios-Hernandez L."/>
            <person name="Sieber J."/>
            <person name="Struchtemeyer C.G."/>
            <person name="Bhattacharyya A."/>
            <person name="Campbell J.W."/>
            <person name="Gunsalus R.P."/>
        </authorList>
    </citation>
    <scope>NUCLEOTIDE SEQUENCE [LARGE SCALE GENOMIC DNA]</scope>
    <source>
        <strain>SB</strain>
    </source>
</reference>
<gene>
    <name evidence="1" type="primary">acpP</name>
    <name type="ordered locus">SYNAS_01890</name>
    <name type="ORF">SYN_02364</name>
</gene>
<sequence length="80" mass="9214">MTLEEKIIEIIVDQLEVTAEECVPEASFINDLGADSLDLAELLLEMEDTFDVEISTEDLKKIRKIQDVIDYLKVRNVTWD</sequence>
<organism>
    <name type="scientific">Syntrophus aciditrophicus (strain SB)</name>
    <dbReference type="NCBI Taxonomy" id="56780"/>
    <lineage>
        <taxon>Bacteria</taxon>
        <taxon>Pseudomonadati</taxon>
        <taxon>Thermodesulfobacteriota</taxon>
        <taxon>Syntrophia</taxon>
        <taxon>Syntrophales</taxon>
        <taxon>Syntrophaceae</taxon>
        <taxon>Syntrophus</taxon>
    </lineage>
</organism>
<comment type="function">
    <text evidence="1">Carrier of the growing fatty acid chain in fatty acid biosynthesis.</text>
</comment>
<comment type="pathway">
    <text evidence="1">Lipid metabolism; fatty acid biosynthesis.</text>
</comment>
<comment type="subcellular location">
    <subcellularLocation>
        <location evidence="1">Cytoplasm</location>
    </subcellularLocation>
</comment>
<comment type="PTM">
    <text evidence="1">4'-phosphopantetheine is transferred from CoA to a specific serine of apo-ACP by AcpS. This modification is essential for activity because fatty acids are bound in thioester linkage to the sulfhydryl of the prosthetic group.</text>
</comment>
<comment type="similarity">
    <text evidence="1">Belongs to the acyl carrier protein (ACP) family.</text>
</comment>
<feature type="chain" id="PRO_1000066703" description="Acyl carrier protein">
    <location>
        <begin position="1"/>
        <end position="80"/>
    </location>
</feature>
<feature type="domain" description="Carrier" evidence="2">
    <location>
        <begin position="1"/>
        <end position="76"/>
    </location>
</feature>
<feature type="modified residue" description="O-(pantetheine 4'-phosphoryl)serine" evidence="2">
    <location>
        <position position="36"/>
    </location>
</feature>
<keyword id="KW-0963">Cytoplasm</keyword>
<keyword id="KW-0275">Fatty acid biosynthesis</keyword>
<keyword id="KW-0276">Fatty acid metabolism</keyword>
<keyword id="KW-0444">Lipid biosynthesis</keyword>
<keyword id="KW-0443">Lipid metabolism</keyword>
<keyword id="KW-0596">Phosphopantetheine</keyword>
<keyword id="KW-0597">Phosphoprotein</keyword>
<keyword id="KW-1185">Reference proteome</keyword>